<evidence type="ECO:0000250" key="1">
    <source>
        <dbReference type="UniProtKB" id="O75348"/>
    </source>
</evidence>
<evidence type="ECO:0000255" key="2"/>
<evidence type="ECO:0000256" key="3">
    <source>
        <dbReference type="SAM" id="MobiDB-lite"/>
    </source>
</evidence>
<evidence type="ECO:0000269" key="4">
    <source>
    </source>
</evidence>
<evidence type="ECO:0000305" key="5"/>
<protein>
    <recommendedName>
        <fullName>V-type proton ATPase subunit G 3</fullName>
        <shortName>V-ATPase subunit G 3</shortName>
    </recommendedName>
    <alternativeName>
        <fullName>V-ATPase 13 kDa subunit 3</fullName>
    </alternativeName>
    <alternativeName>
        <fullName>Vacuolar proton pump subunit G 3</fullName>
    </alternativeName>
</protein>
<sequence length="118" mass="13749">MTSQSQGIQQLLQAEKRAKDKLDEAKKRKGKRLRQAKEEAVAETDQYRMQMEKDFRLKQAKIMGSQSHLSDEIEEQTLEKIKELNGSYNKCMESVIKQLLSMVCDMKPEVHVNYRATN</sequence>
<name>VATG3_MOUSE</name>
<accession>Q8BMC1</accession>
<dbReference type="EMBL" id="AB088359">
    <property type="protein sequence ID" value="BAC57952.1"/>
    <property type="molecule type" value="mRNA"/>
</dbReference>
<dbReference type="EMBL" id="AK032887">
    <property type="protein sequence ID" value="BAC28072.1"/>
    <property type="molecule type" value="mRNA"/>
</dbReference>
<dbReference type="EMBL" id="BC107267">
    <property type="protein sequence ID" value="AAI07268.1"/>
    <property type="molecule type" value="mRNA"/>
</dbReference>
<dbReference type="EMBL" id="BC107268">
    <property type="protein sequence ID" value="AAI07269.1"/>
    <property type="molecule type" value="mRNA"/>
</dbReference>
<dbReference type="CCDS" id="CCDS15331.1"/>
<dbReference type="RefSeq" id="NP_796371.1">
    <property type="nucleotide sequence ID" value="NM_177397.3"/>
</dbReference>
<dbReference type="SMR" id="Q8BMC1"/>
<dbReference type="BioGRID" id="237226">
    <property type="interactions" value="1"/>
</dbReference>
<dbReference type="FunCoup" id="Q8BMC1">
    <property type="interactions" value="579"/>
</dbReference>
<dbReference type="STRING" id="10090.ENSMUSP00000027643"/>
<dbReference type="TCDB" id="3.A.2.2.6">
    <property type="family name" value="the h+- or na+-translocating f-type, v-type and a-type atpase (f-atpase) superfamily"/>
</dbReference>
<dbReference type="iPTMnet" id="Q8BMC1"/>
<dbReference type="PhosphoSitePlus" id="Q8BMC1"/>
<dbReference type="jPOST" id="Q8BMC1"/>
<dbReference type="PaxDb" id="10090-ENSMUSP00000027643"/>
<dbReference type="PeptideAtlas" id="Q8BMC1"/>
<dbReference type="ProteomicsDB" id="275173"/>
<dbReference type="Antibodypedia" id="34484">
    <property type="antibodies" value="105 antibodies from 26 providers"/>
</dbReference>
<dbReference type="DNASU" id="338375"/>
<dbReference type="Ensembl" id="ENSMUST00000027643.6">
    <property type="protein sequence ID" value="ENSMUSP00000027643.5"/>
    <property type="gene ID" value="ENSMUSG00000026394.6"/>
</dbReference>
<dbReference type="GeneID" id="338375"/>
<dbReference type="KEGG" id="mmu:338375"/>
<dbReference type="UCSC" id="uc007cvm.1">
    <property type="organism name" value="mouse"/>
</dbReference>
<dbReference type="AGR" id="MGI:2450548"/>
<dbReference type="CTD" id="127124"/>
<dbReference type="MGI" id="MGI:2450548">
    <property type="gene designation" value="Atp6v1g3"/>
</dbReference>
<dbReference type="VEuPathDB" id="HostDB:ENSMUSG00000026394"/>
<dbReference type="eggNOG" id="KOG1772">
    <property type="taxonomic scope" value="Eukaryota"/>
</dbReference>
<dbReference type="GeneTree" id="ENSGT00940000160882"/>
<dbReference type="HOGENOM" id="CLU_125101_1_1_1"/>
<dbReference type="InParanoid" id="Q8BMC1"/>
<dbReference type="OMA" id="SYHRNME"/>
<dbReference type="OrthoDB" id="250802at2759"/>
<dbReference type="PhylomeDB" id="Q8BMC1"/>
<dbReference type="TreeFam" id="TF313777"/>
<dbReference type="Reactome" id="R-MMU-1222556">
    <property type="pathway name" value="ROS and RNS production in phagocytes"/>
</dbReference>
<dbReference type="Reactome" id="R-MMU-77387">
    <property type="pathway name" value="Insulin receptor recycling"/>
</dbReference>
<dbReference type="Reactome" id="R-MMU-917977">
    <property type="pathway name" value="Transferrin endocytosis and recycling"/>
</dbReference>
<dbReference type="Reactome" id="R-MMU-9639288">
    <property type="pathway name" value="Amino acids regulate mTORC1"/>
</dbReference>
<dbReference type="Reactome" id="R-MMU-983712">
    <property type="pathway name" value="Ion channel transport"/>
</dbReference>
<dbReference type="BioGRID-ORCS" id="338375">
    <property type="hits" value="0 hits in 77 CRISPR screens"/>
</dbReference>
<dbReference type="PRO" id="PR:Q8BMC1"/>
<dbReference type="Proteomes" id="UP000000589">
    <property type="component" value="Chromosome 1"/>
</dbReference>
<dbReference type="RNAct" id="Q8BMC1">
    <property type="molecule type" value="protein"/>
</dbReference>
<dbReference type="Bgee" id="ENSMUSG00000026394">
    <property type="expression patterns" value="Expressed in right kidney and 9 other cell types or tissues"/>
</dbReference>
<dbReference type="GO" id="GO:0005829">
    <property type="term" value="C:cytosol"/>
    <property type="evidence" value="ECO:0000314"/>
    <property type="project" value="UniProtKB"/>
</dbReference>
<dbReference type="GO" id="GO:0016020">
    <property type="term" value="C:membrane"/>
    <property type="evidence" value="ECO:0000305"/>
    <property type="project" value="MGI"/>
</dbReference>
<dbReference type="GO" id="GO:0005886">
    <property type="term" value="C:plasma membrane"/>
    <property type="evidence" value="ECO:0000314"/>
    <property type="project" value="UniProtKB"/>
</dbReference>
<dbReference type="GO" id="GO:0016471">
    <property type="term" value="C:vacuolar proton-transporting V-type ATPase complex"/>
    <property type="evidence" value="ECO:0007669"/>
    <property type="project" value="InterPro"/>
</dbReference>
<dbReference type="GO" id="GO:0051117">
    <property type="term" value="F:ATPase binding"/>
    <property type="evidence" value="ECO:0007669"/>
    <property type="project" value="Ensembl"/>
</dbReference>
<dbReference type="GO" id="GO:0046961">
    <property type="term" value="F:proton-transporting ATPase activity, rotational mechanism"/>
    <property type="evidence" value="ECO:0000314"/>
    <property type="project" value="MGI"/>
</dbReference>
<dbReference type="GO" id="GO:1902600">
    <property type="term" value="P:proton transmembrane transport"/>
    <property type="evidence" value="ECO:0000305"/>
    <property type="project" value="MGI"/>
</dbReference>
<dbReference type="FunFam" id="1.20.5.2950:FF:000001">
    <property type="entry name" value="V-type proton ATPase subunit G"/>
    <property type="match status" value="1"/>
</dbReference>
<dbReference type="FunFam" id="1.20.5.620:FF:000004">
    <property type="entry name" value="V-type proton ATPase subunit G"/>
    <property type="match status" value="1"/>
</dbReference>
<dbReference type="Gene3D" id="1.20.5.2950">
    <property type="match status" value="1"/>
</dbReference>
<dbReference type="InterPro" id="IPR005124">
    <property type="entry name" value="V-ATPase_G"/>
</dbReference>
<dbReference type="NCBIfam" id="TIGR01147">
    <property type="entry name" value="V_ATP_synt_G"/>
    <property type="match status" value="1"/>
</dbReference>
<dbReference type="PANTHER" id="PTHR12713:SF5">
    <property type="entry name" value="V-TYPE PROTON ATPASE SUBUNIT G 3"/>
    <property type="match status" value="1"/>
</dbReference>
<dbReference type="PANTHER" id="PTHR12713">
    <property type="entry name" value="VACUOLAR ATP SYNTHASE SUBUNIT G"/>
    <property type="match status" value="1"/>
</dbReference>
<dbReference type="Pfam" id="PF03179">
    <property type="entry name" value="V-ATPase_G"/>
    <property type="match status" value="1"/>
</dbReference>
<reference key="1">
    <citation type="journal article" date="2003" name="Gene">
        <title>Diversity of mouse proton-translocating ATPase: presence of multiple isoforms of the C, d and G subunits.</title>
        <authorList>
            <person name="Sun-Wada G.-H."/>
            <person name="Yoshimizu T."/>
            <person name="Imai-Senga Y."/>
            <person name="Wada Y."/>
            <person name="Futai M."/>
        </authorList>
    </citation>
    <scope>NUCLEOTIDE SEQUENCE [MRNA]</scope>
    <scope>TISSUE SPECIFICITY</scope>
</reference>
<reference key="2">
    <citation type="journal article" date="2005" name="Science">
        <title>The transcriptional landscape of the mammalian genome.</title>
        <authorList>
            <person name="Carninci P."/>
            <person name="Kasukawa T."/>
            <person name="Katayama S."/>
            <person name="Gough J."/>
            <person name="Frith M.C."/>
            <person name="Maeda N."/>
            <person name="Oyama R."/>
            <person name="Ravasi T."/>
            <person name="Lenhard B."/>
            <person name="Wells C."/>
            <person name="Kodzius R."/>
            <person name="Shimokawa K."/>
            <person name="Bajic V.B."/>
            <person name="Brenner S.E."/>
            <person name="Batalov S."/>
            <person name="Forrest A.R."/>
            <person name="Zavolan M."/>
            <person name="Davis M.J."/>
            <person name="Wilming L.G."/>
            <person name="Aidinis V."/>
            <person name="Allen J.E."/>
            <person name="Ambesi-Impiombato A."/>
            <person name="Apweiler R."/>
            <person name="Aturaliya R.N."/>
            <person name="Bailey T.L."/>
            <person name="Bansal M."/>
            <person name="Baxter L."/>
            <person name="Beisel K.W."/>
            <person name="Bersano T."/>
            <person name="Bono H."/>
            <person name="Chalk A.M."/>
            <person name="Chiu K.P."/>
            <person name="Choudhary V."/>
            <person name="Christoffels A."/>
            <person name="Clutterbuck D.R."/>
            <person name="Crowe M.L."/>
            <person name="Dalla E."/>
            <person name="Dalrymple B.P."/>
            <person name="de Bono B."/>
            <person name="Della Gatta G."/>
            <person name="di Bernardo D."/>
            <person name="Down T."/>
            <person name="Engstrom P."/>
            <person name="Fagiolini M."/>
            <person name="Faulkner G."/>
            <person name="Fletcher C.F."/>
            <person name="Fukushima T."/>
            <person name="Furuno M."/>
            <person name="Futaki S."/>
            <person name="Gariboldi M."/>
            <person name="Georgii-Hemming P."/>
            <person name="Gingeras T.R."/>
            <person name="Gojobori T."/>
            <person name="Green R.E."/>
            <person name="Gustincich S."/>
            <person name="Harbers M."/>
            <person name="Hayashi Y."/>
            <person name="Hensch T.K."/>
            <person name="Hirokawa N."/>
            <person name="Hill D."/>
            <person name="Huminiecki L."/>
            <person name="Iacono M."/>
            <person name="Ikeo K."/>
            <person name="Iwama A."/>
            <person name="Ishikawa T."/>
            <person name="Jakt M."/>
            <person name="Kanapin A."/>
            <person name="Katoh M."/>
            <person name="Kawasawa Y."/>
            <person name="Kelso J."/>
            <person name="Kitamura H."/>
            <person name="Kitano H."/>
            <person name="Kollias G."/>
            <person name="Krishnan S.P."/>
            <person name="Kruger A."/>
            <person name="Kummerfeld S.K."/>
            <person name="Kurochkin I.V."/>
            <person name="Lareau L.F."/>
            <person name="Lazarevic D."/>
            <person name="Lipovich L."/>
            <person name="Liu J."/>
            <person name="Liuni S."/>
            <person name="McWilliam S."/>
            <person name="Madan Babu M."/>
            <person name="Madera M."/>
            <person name="Marchionni L."/>
            <person name="Matsuda H."/>
            <person name="Matsuzawa S."/>
            <person name="Miki H."/>
            <person name="Mignone F."/>
            <person name="Miyake S."/>
            <person name="Morris K."/>
            <person name="Mottagui-Tabar S."/>
            <person name="Mulder N."/>
            <person name="Nakano N."/>
            <person name="Nakauchi H."/>
            <person name="Ng P."/>
            <person name="Nilsson R."/>
            <person name="Nishiguchi S."/>
            <person name="Nishikawa S."/>
            <person name="Nori F."/>
            <person name="Ohara O."/>
            <person name="Okazaki Y."/>
            <person name="Orlando V."/>
            <person name="Pang K.C."/>
            <person name="Pavan W.J."/>
            <person name="Pavesi G."/>
            <person name="Pesole G."/>
            <person name="Petrovsky N."/>
            <person name="Piazza S."/>
            <person name="Reed J."/>
            <person name="Reid J.F."/>
            <person name="Ring B.Z."/>
            <person name="Ringwald M."/>
            <person name="Rost B."/>
            <person name="Ruan Y."/>
            <person name="Salzberg S.L."/>
            <person name="Sandelin A."/>
            <person name="Schneider C."/>
            <person name="Schoenbach C."/>
            <person name="Sekiguchi K."/>
            <person name="Semple C.A."/>
            <person name="Seno S."/>
            <person name="Sessa L."/>
            <person name="Sheng Y."/>
            <person name="Shibata Y."/>
            <person name="Shimada H."/>
            <person name="Shimada K."/>
            <person name="Silva D."/>
            <person name="Sinclair B."/>
            <person name="Sperling S."/>
            <person name="Stupka E."/>
            <person name="Sugiura K."/>
            <person name="Sultana R."/>
            <person name="Takenaka Y."/>
            <person name="Taki K."/>
            <person name="Tammoja K."/>
            <person name="Tan S.L."/>
            <person name="Tang S."/>
            <person name="Taylor M.S."/>
            <person name="Tegner J."/>
            <person name="Teichmann S.A."/>
            <person name="Ueda H.R."/>
            <person name="van Nimwegen E."/>
            <person name="Verardo R."/>
            <person name="Wei C.L."/>
            <person name="Yagi K."/>
            <person name="Yamanishi H."/>
            <person name="Zabarovsky E."/>
            <person name="Zhu S."/>
            <person name="Zimmer A."/>
            <person name="Hide W."/>
            <person name="Bult C."/>
            <person name="Grimmond S.M."/>
            <person name="Teasdale R.D."/>
            <person name="Liu E.T."/>
            <person name="Brusic V."/>
            <person name="Quackenbush J."/>
            <person name="Wahlestedt C."/>
            <person name="Mattick J.S."/>
            <person name="Hume D.A."/>
            <person name="Kai C."/>
            <person name="Sasaki D."/>
            <person name="Tomaru Y."/>
            <person name="Fukuda S."/>
            <person name="Kanamori-Katayama M."/>
            <person name="Suzuki M."/>
            <person name="Aoki J."/>
            <person name="Arakawa T."/>
            <person name="Iida J."/>
            <person name="Imamura K."/>
            <person name="Itoh M."/>
            <person name="Kato T."/>
            <person name="Kawaji H."/>
            <person name="Kawagashira N."/>
            <person name="Kawashima T."/>
            <person name="Kojima M."/>
            <person name="Kondo S."/>
            <person name="Konno H."/>
            <person name="Nakano K."/>
            <person name="Ninomiya N."/>
            <person name="Nishio T."/>
            <person name="Okada M."/>
            <person name="Plessy C."/>
            <person name="Shibata K."/>
            <person name="Shiraki T."/>
            <person name="Suzuki S."/>
            <person name="Tagami M."/>
            <person name="Waki K."/>
            <person name="Watahiki A."/>
            <person name="Okamura-Oho Y."/>
            <person name="Suzuki H."/>
            <person name="Kawai J."/>
            <person name="Hayashizaki Y."/>
        </authorList>
    </citation>
    <scope>NUCLEOTIDE SEQUENCE [LARGE SCALE MRNA]</scope>
    <source>
        <strain>C57BL/6J</strain>
        <tissue>Wolffian duct</tissue>
    </source>
</reference>
<reference key="3">
    <citation type="journal article" date="2004" name="Genome Res.">
        <title>The status, quality, and expansion of the NIH full-length cDNA project: the Mammalian Gene Collection (MGC).</title>
        <authorList>
            <consortium name="The MGC Project Team"/>
        </authorList>
    </citation>
    <scope>NUCLEOTIDE SEQUENCE [LARGE SCALE MRNA]</scope>
</reference>
<reference key="4">
    <citation type="journal article" date="2010" name="Cell">
        <title>A tissue-specific atlas of mouse protein phosphorylation and expression.</title>
        <authorList>
            <person name="Huttlin E.L."/>
            <person name="Jedrychowski M.P."/>
            <person name="Elias J.E."/>
            <person name="Goswami T."/>
            <person name="Rad R."/>
            <person name="Beausoleil S.A."/>
            <person name="Villen J."/>
            <person name="Haas W."/>
            <person name="Sowa M.E."/>
            <person name="Gygi S.P."/>
        </authorList>
    </citation>
    <scope>IDENTIFICATION BY MASS SPECTROMETRY [LARGE SCALE ANALYSIS]</scope>
    <source>
        <tissue>Kidney</tissue>
    </source>
</reference>
<gene>
    <name type="primary">Atp6v1g3</name>
    <name type="synonym">Atp6g3</name>
</gene>
<keyword id="KW-0175">Coiled coil</keyword>
<keyword id="KW-0375">Hydrogen ion transport</keyword>
<keyword id="KW-0406">Ion transport</keyword>
<keyword id="KW-1185">Reference proteome</keyword>
<keyword id="KW-0813">Transport</keyword>
<comment type="function">
    <text evidence="1">Subunit of the V1 complex of vacuolar(H+)-ATPase (V-ATPase), a multisubunit enzyme composed of a peripheral complex (V1) that hydrolyzes ATP and a membrane integral complex (V0) that translocates protons. V-ATPase is responsible for acidifying and maintaining the pH of intracellular compartments and in some cell types, is targeted to the plasma membrane, where it is responsible for acidifying the extracellular environment.</text>
</comment>
<comment type="subunit">
    <text evidence="1">V-ATPase is a heteromultimeric enzyme made up of two complexes: the ATP-hydrolytic V1 complex and the proton translocation V0 complex. The V1 complex consists of three catalytic AB heterodimers that form a heterohexamer, three peripheral stalks each consisting of EG heterodimers, one central rotor including subunits D and F, and the regulatory subunits C and H. The proton translocation complex V0 consists of the proton transport subunit a, a ring of proteolipid subunits c9c'', rotary subunit d, subunits e and f, and the accessory subunits ATP6AP1/Ac45 and ATP6AP2/PRR.</text>
</comment>
<comment type="tissue specificity">
    <text evidence="4">Kidney.</text>
</comment>
<comment type="similarity">
    <text evidence="5">Belongs to the V-ATPase G subunit family.</text>
</comment>
<organism>
    <name type="scientific">Mus musculus</name>
    <name type="common">Mouse</name>
    <dbReference type="NCBI Taxonomy" id="10090"/>
    <lineage>
        <taxon>Eukaryota</taxon>
        <taxon>Metazoa</taxon>
        <taxon>Chordata</taxon>
        <taxon>Craniata</taxon>
        <taxon>Vertebrata</taxon>
        <taxon>Euteleostomi</taxon>
        <taxon>Mammalia</taxon>
        <taxon>Eutheria</taxon>
        <taxon>Euarchontoglires</taxon>
        <taxon>Glires</taxon>
        <taxon>Rodentia</taxon>
        <taxon>Myomorpha</taxon>
        <taxon>Muroidea</taxon>
        <taxon>Muridae</taxon>
        <taxon>Murinae</taxon>
        <taxon>Mus</taxon>
        <taxon>Mus</taxon>
    </lineage>
</organism>
<proteinExistence type="evidence at protein level"/>
<feature type="chain" id="PRO_0000285921" description="V-type proton ATPase subunit G 3">
    <location>
        <begin position="1"/>
        <end position="118"/>
    </location>
</feature>
<feature type="region of interest" description="Disordered" evidence="3">
    <location>
        <begin position="1"/>
        <end position="44"/>
    </location>
</feature>
<feature type="coiled-coil region" evidence="2">
    <location>
        <begin position="5"/>
        <end position="53"/>
    </location>
</feature>
<feature type="compositionally biased region" description="Polar residues" evidence="3">
    <location>
        <begin position="1"/>
        <end position="12"/>
    </location>
</feature>
<feature type="compositionally biased region" description="Basic and acidic residues" evidence="3">
    <location>
        <begin position="14"/>
        <end position="26"/>
    </location>
</feature>